<organism>
    <name type="scientific">Arabidopsis thaliana</name>
    <name type="common">Mouse-ear cress</name>
    <dbReference type="NCBI Taxonomy" id="3702"/>
    <lineage>
        <taxon>Eukaryota</taxon>
        <taxon>Viridiplantae</taxon>
        <taxon>Streptophyta</taxon>
        <taxon>Embryophyta</taxon>
        <taxon>Tracheophyta</taxon>
        <taxon>Spermatophyta</taxon>
        <taxon>Magnoliopsida</taxon>
        <taxon>eudicotyledons</taxon>
        <taxon>Gunneridae</taxon>
        <taxon>Pentapetalae</taxon>
        <taxon>rosids</taxon>
        <taxon>malvids</taxon>
        <taxon>Brassicales</taxon>
        <taxon>Brassicaceae</taxon>
        <taxon>Camelineae</taxon>
        <taxon>Arabidopsis</taxon>
    </lineage>
</organism>
<dbReference type="EMBL" id="AJ344334">
    <property type="protein sequence ID" value="CAC69070.1"/>
    <property type="molecule type" value="mRNA"/>
</dbReference>
<dbReference type="EMBL" id="AC004260">
    <property type="protein sequence ID" value="AAC34349.1"/>
    <property type="molecule type" value="Genomic_DNA"/>
</dbReference>
<dbReference type="EMBL" id="CP002684">
    <property type="protein sequence ID" value="AEE35949.1"/>
    <property type="molecule type" value="Genomic_DNA"/>
</dbReference>
<dbReference type="EMBL" id="CP002684">
    <property type="protein sequence ID" value="AEE35950.1"/>
    <property type="molecule type" value="Genomic_DNA"/>
</dbReference>
<dbReference type="EMBL" id="AK119057">
    <property type="protein sequence ID" value="BAC43633.1"/>
    <property type="molecule type" value="mRNA"/>
</dbReference>
<dbReference type="EMBL" id="BT005887">
    <property type="protein sequence ID" value="AAO64822.1"/>
    <property type="molecule type" value="mRNA"/>
</dbReference>
<dbReference type="PIR" id="T00450">
    <property type="entry name" value="T00450"/>
</dbReference>
<dbReference type="RefSeq" id="NP_001185417.1">
    <property type="nucleotide sequence ID" value="NM_001198488.2"/>
</dbReference>
<dbReference type="RefSeq" id="NP_177845.1">
    <property type="nucleotide sequence ID" value="NM_106370.5"/>
</dbReference>
<dbReference type="SMR" id="Q8GW61"/>
<dbReference type="BioGRID" id="29276">
    <property type="interactions" value="5"/>
</dbReference>
<dbReference type="FunCoup" id="Q8GW61">
    <property type="interactions" value="154"/>
</dbReference>
<dbReference type="IntAct" id="Q8GW61">
    <property type="interactions" value="2"/>
</dbReference>
<dbReference type="STRING" id="3702.Q8GW61"/>
<dbReference type="iPTMnet" id="Q8GW61"/>
<dbReference type="PaxDb" id="3702-AT1G77210.1"/>
<dbReference type="ProteomicsDB" id="228308"/>
<dbReference type="EnsemblPlants" id="AT1G77210.1">
    <property type="protein sequence ID" value="AT1G77210.1"/>
    <property type="gene ID" value="AT1G77210"/>
</dbReference>
<dbReference type="EnsemblPlants" id="AT1G77210.2">
    <property type="protein sequence ID" value="AT1G77210.2"/>
    <property type="gene ID" value="AT1G77210"/>
</dbReference>
<dbReference type="GeneID" id="844057"/>
<dbReference type="Gramene" id="AT1G77210.1">
    <property type="protein sequence ID" value="AT1G77210.1"/>
    <property type="gene ID" value="AT1G77210"/>
</dbReference>
<dbReference type="Gramene" id="AT1G77210.2">
    <property type="protein sequence ID" value="AT1G77210.2"/>
    <property type="gene ID" value="AT1G77210"/>
</dbReference>
<dbReference type="KEGG" id="ath:AT1G77210"/>
<dbReference type="Araport" id="AT1G77210"/>
<dbReference type="TAIR" id="AT1G77210">
    <property type="gene designation" value="STP14"/>
</dbReference>
<dbReference type="eggNOG" id="KOG0254">
    <property type="taxonomic scope" value="Eukaryota"/>
</dbReference>
<dbReference type="HOGENOM" id="CLU_001265_30_5_1"/>
<dbReference type="InParanoid" id="Q8GW61"/>
<dbReference type="OMA" id="MAIIVSC"/>
<dbReference type="OrthoDB" id="5296287at2759"/>
<dbReference type="PhylomeDB" id="Q8GW61"/>
<dbReference type="PRO" id="PR:Q8GW61"/>
<dbReference type="Proteomes" id="UP000006548">
    <property type="component" value="Chromosome 1"/>
</dbReference>
<dbReference type="ExpressionAtlas" id="Q8GW61">
    <property type="expression patterns" value="baseline and differential"/>
</dbReference>
<dbReference type="GO" id="GO:0005886">
    <property type="term" value="C:plasma membrane"/>
    <property type="evidence" value="ECO:0000314"/>
    <property type="project" value="TAIR"/>
</dbReference>
<dbReference type="GO" id="GO:0015145">
    <property type="term" value="F:monosaccharide transmembrane transporter activity"/>
    <property type="evidence" value="ECO:0007669"/>
    <property type="project" value="InterPro"/>
</dbReference>
<dbReference type="GO" id="GO:0015293">
    <property type="term" value="F:symporter activity"/>
    <property type="evidence" value="ECO:0007669"/>
    <property type="project" value="UniProtKB-KW"/>
</dbReference>
<dbReference type="CDD" id="cd17361">
    <property type="entry name" value="MFS_STP"/>
    <property type="match status" value="1"/>
</dbReference>
<dbReference type="FunFam" id="1.20.1250.20:FF:000002">
    <property type="entry name" value="Sugar transport protein 13"/>
    <property type="match status" value="1"/>
</dbReference>
<dbReference type="Gene3D" id="1.20.1250.20">
    <property type="entry name" value="MFS general substrate transporter like domains"/>
    <property type="match status" value="1"/>
</dbReference>
<dbReference type="InterPro" id="IPR020846">
    <property type="entry name" value="MFS_dom"/>
</dbReference>
<dbReference type="InterPro" id="IPR044778">
    <property type="entry name" value="MFS_STP/MST-like_plant"/>
</dbReference>
<dbReference type="InterPro" id="IPR005828">
    <property type="entry name" value="MFS_sugar_transport-like"/>
</dbReference>
<dbReference type="InterPro" id="IPR036259">
    <property type="entry name" value="MFS_trans_sf"/>
</dbReference>
<dbReference type="InterPro" id="IPR045262">
    <property type="entry name" value="STP/PLT_plant"/>
</dbReference>
<dbReference type="InterPro" id="IPR003663">
    <property type="entry name" value="Sugar/inositol_transpt"/>
</dbReference>
<dbReference type="InterPro" id="IPR005829">
    <property type="entry name" value="Sugar_transporter_CS"/>
</dbReference>
<dbReference type="NCBIfam" id="TIGR00879">
    <property type="entry name" value="SP"/>
    <property type="match status" value="1"/>
</dbReference>
<dbReference type="PANTHER" id="PTHR23500">
    <property type="entry name" value="SOLUTE CARRIER FAMILY 2, FACILITATED GLUCOSE TRANSPORTER"/>
    <property type="match status" value="1"/>
</dbReference>
<dbReference type="PANTHER" id="PTHR23500:SF14">
    <property type="entry name" value="SUGAR TRANSPORT PROTEIN 14"/>
    <property type="match status" value="1"/>
</dbReference>
<dbReference type="Pfam" id="PF00083">
    <property type="entry name" value="Sugar_tr"/>
    <property type="match status" value="1"/>
</dbReference>
<dbReference type="PRINTS" id="PR00171">
    <property type="entry name" value="SUGRTRNSPORT"/>
</dbReference>
<dbReference type="SUPFAM" id="SSF103473">
    <property type="entry name" value="MFS general substrate transporter"/>
    <property type="match status" value="1"/>
</dbReference>
<dbReference type="PROSITE" id="PS50850">
    <property type="entry name" value="MFS"/>
    <property type="match status" value="1"/>
</dbReference>
<dbReference type="PROSITE" id="PS00216">
    <property type="entry name" value="SUGAR_TRANSPORT_1"/>
    <property type="match status" value="1"/>
</dbReference>
<dbReference type="PROSITE" id="PS00217">
    <property type="entry name" value="SUGAR_TRANSPORT_2"/>
    <property type="match status" value="1"/>
</dbReference>
<protein>
    <recommendedName>
        <fullName>Sugar transport protein 14</fullName>
    </recommendedName>
    <alternativeName>
        <fullName>Hexose transporter 14</fullName>
    </alternativeName>
</protein>
<reference key="1">
    <citation type="submission" date="2001-09" db="EMBL/GenBank/DDBJ databases">
        <title>STP14, a new Arabidpsis monosaccharide transporter.</title>
        <authorList>
            <person name="Buettner M."/>
        </authorList>
    </citation>
    <scope>NUCLEOTIDE SEQUENCE [MRNA]</scope>
</reference>
<reference key="2">
    <citation type="journal article" date="2000" name="Nature">
        <title>Sequence and analysis of chromosome 1 of the plant Arabidopsis thaliana.</title>
        <authorList>
            <person name="Theologis A."/>
            <person name="Ecker J.R."/>
            <person name="Palm C.J."/>
            <person name="Federspiel N.A."/>
            <person name="Kaul S."/>
            <person name="White O."/>
            <person name="Alonso J."/>
            <person name="Altafi H."/>
            <person name="Araujo R."/>
            <person name="Bowman C.L."/>
            <person name="Brooks S.Y."/>
            <person name="Buehler E."/>
            <person name="Chan A."/>
            <person name="Chao Q."/>
            <person name="Chen H."/>
            <person name="Cheuk R.F."/>
            <person name="Chin C.W."/>
            <person name="Chung M.K."/>
            <person name="Conn L."/>
            <person name="Conway A.B."/>
            <person name="Conway A.R."/>
            <person name="Creasy T.H."/>
            <person name="Dewar K."/>
            <person name="Dunn P."/>
            <person name="Etgu P."/>
            <person name="Feldblyum T.V."/>
            <person name="Feng J.-D."/>
            <person name="Fong B."/>
            <person name="Fujii C.Y."/>
            <person name="Gill J.E."/>
            <person name="Goldsmith A.D."/>
            <person name="Haas B."/>
            <person name="Hansen N.F."/>
            <person name="Hughes B."/>
            <person name="Huizar L."/>
            <person name="Hunter J.L."/>
            <person name="Jenkins J."/>
            <person name="Johnson-Hopson C."/>
            <person name="Khan S."/>
            <person name="Khaykin E."/>
            <person name="Kim C.J."/>
            <person name="Koo H.L."/>
            <person name="Kremenetskaia I."/>
            <person name="Kurtz D.B."/>
            <person name="Kwan A."/>
            <person name="Lam B."/>
            <person name="Langin-Hooper S."/>
            <person name="Lee A."/>
            <person name="Lee J.M."/>
            <person name="Lenz C.A."/>
            <person name="Li J.H."/>
            <person name="Li Y.-P."/>
            <person name="Lin X."/>
            <person name="Liu S.X."/>
            <person name="Liu Z.A."/>
            <person name="Luros J.S."/>
            <person name="Maiti R."/>
            <person name="Marziali A."/>
            <person name="Militscher J."/>
            <person name="Miranda M."/>
            <person name="Nguyen M."/>
            <person name="Nierman W.C."/>
            <person name="Osborne B.I."/>
            <person name="Pai G."/>
            <person name="Peterson J."/>
            <person name="Pham P.K."/>
            <person name="Rizzo M."/>
            <person name="Rooney T."/>
            <person name="Rowley D."/>
            <person name="Sakano H."/>
            <person name="Salzberg S.L."/>
            <person name="Schwartz J.R."/>
            <person name="Shinn P."/>
            <person name="Southwick A.M."/>
            <person name="Sun H."/>
            <person name="Tallon L.J."/>
            <person name="Tambunga G."/>
            <person name="Toriumi M.J."/>
            <person name="Town C.D."/>
            <person name="Utterback T."/>
            <person name="Van Aken S."/>
            <person name="Vaysberg M."/>
            <person name="Vysotskaia V.S."/>
            <person name="Walker M."/>
            <person name="Wu D."/>
            <person name="Yu G."/>
            <person name="Fraser C.M."/>
            <person name="Venter J.C."/>
            <person name="Davis R.W."/>
        </authorList>
    </citation>
    <scope>NUCLEOTIDE SEQUENCE [LARGE SCALE GENOMIC DNA]</scope>
    <source>
        <strain>cv. Columbia</strain>
    </source>
</reference>
<reference key="3">
    <citation type="journal article" date="2017" name="Plant J.">
        <title>Araport11: a complete reannotation of the Arabidopsis thaliana reference genome.</title>
        <authorList>
            <person name="Cheng C.Y."/>
            <person name="Krishnakumar V."/>
            <person name="Chan A.P."/>
            <person name="Thibaud-Nissen F."/>
            <person name="Schobel S."/>
            <person name="Town C.D."/>
        </authorList>
    </citation>
    <scope>GENOME REANNOTATION</scope>
    <source>
        <strain>cv. Columbia</strain>
    </source>
</reference>
<reference key="4">
    <citation type="journal article" date="2002" name="Science">
        <title>Functional annotation of a full-length Arabidopsis cDNA collection.</title>
        <authorList>
            <person name="Seki M."/>
            <person name="Narusaka M."/>
            <person name="Kamiya A."/>
            <person name="Ishida J."/>
            <person name="Satou M."/>
            <person name="Sakurai T."/>
            <person name="Nakajima M."/>
            <person name="Enju A."/>
            <person name="Akiyama K."/>
            <person name="Oono Y."/>
            <person name="Muramatsu M."/>
            <person name="Hayashizaki Y."/>
            <person name="Kawai J."/>
            <person name="Carninci P."/>
            <person name="Itoh M."/>
            <person name="Ishii Y."/>
            <person name="Arakawa T."/>
            <person name="Shibata K."/>
            <person name="Shinagawa A."/>
            <person name="Shinozaki K."/>
        </authorList>
    </citation>
    <scope>NUCLEOTIDE SEQUENCE [LARGE SCALE MRNA]</scope>
    <source>
        <strain>cv. Columbia</strain>
    </source>
</reference>
<reference key="5">
    <citation type="journal article" date="2003" name="Science">
        <title>Empirical analysis of transcriptional activity in the Arabidopsis genome.</title>
        <authorList>
            <person name="Yamada K."/>
            <person name="Lim J."/>
            <person name="Dale J.M."/>
            <person name="Chen H."/>
            <person name="Shinn P."/>
            <person name="Palm C.J."/>
            <person name="Southwick A.M."/>
            <person name="Wu H.C."/>
            <person name="Kim C.J."/>
            <person name="Nguyen M."/>
            <person name="Pham P.K."/>
            <person name="Cheuk R.F."/>
            <person name="Karlin-Newmann G."/>
            <person name="Liu S.X."/>
            <person name="Lam B."/>
            <person name="Sakano H."/>
            <person name="Wu T."/>
            <person name="Yu G."/>
            <person name="Miranda M."/>
            <person name="Quach H.L."/>
            <person name="Tripp M."/>
            <person name="Chang C.H."/>
            <person name="Lee J.M."/>
            <person name="Toriumi M.J."/>
            <person name="Chan M.M."/>
            <person name="Tang C.C."/>
            <person name="Onodera C.S."/>
            <person name="Deng J.M."/>
            <person name="Akiyama K."/>
            <person name="Ansari Y."/>
            <person name="Arakawa T."/>
            <person name="Banh J."/>
            <person name="Banno F."/>
            <person name="Bowser L."/>
            <person name="Brooks S.Y."/>
            <person name="Carninci P."/>
            <person name="Chao Q."/>
            <person name="Choy N."/>
            <person name="Enju A."/>
            <person name="Goldsmith A.D."/>
            <person name="Gurjal M."/>
            <person name="Hansen N.F."/>
            <person name="Hayashizaki Y."/>
            <person name="Johnson-Hopson C."/>
            <person name="Hsuan V.W."/>
            <person name="Iida K."/>
            <person name="Karnes M."/>
            <person name="Khan S."/>
            <person name="Koesema E."/>
            <person name="Ishida J."/>
            <person name="Jiang P.X."/>
            <person name="Jones T."/>
            <person name="Kawai J."/>
            <person name="Kamiya A."/>
            <person name="Meyers C."/>
            <person name="Nakajima M."/>
            <person name="Narusaka M."/>
            <person name="Seki M."/>
            <person name="Sakurai T."/>
            <person name="Satou M."/>
            <person name="Tamse R."/>
            <person name="Vaysberg M."/>
            <person name="Wallender E.K."/>
            <person name="Wong C."/>
            <person name="Yamamura Y."/>
            <person name="Yuan S."/>
            <person name="Shinozaki K."/>
            <person name="Davis R.W."/>
            <person name="Theologis A."/>
            <person name="Ecker J.R."/>
        </authorList>
    </citation>
    <scope>NUCLEOTIDE SEQUENCE [LARGE SCALE MRNA]</scope>
    <source>
        <strain>cv. Columbia</strain>
    </source>
</reference>
<reference key="6">
    <citation type="journal article" date="2006" name="BMC Evol. Biol.">
        <title>The monosaccharide transporter gene family in land plants is ancient and shows differential subfamily expression and expansion across lineages.</title>
        <authorList>
            <person name="Johnson D.A."/>
            <person name="Hill J.P."/>
            <person name="Thomas M.A."/>
        </authorList>
    </citation>
    <scope>GENE FAMILY</scope>
</reference>
<accession>Q8GW61</accession>
<accession>O80655</accession>
<comment type="function">
    <text evidence="1">Mediates an active uptake of hexoses, probably by sugar/hydrogen symport.</text>
</comment>
<comment type="subcellular location">
    <subcellularLocation>
        <location>Membrane</location>
        <topology>Multi-pass membrane protein</topology>
    </subcellularLocation>
</comment>
<comment type="similarity">
    <text evidence="3">Belongs to the major facilitator superfamily. Sugar transporter (TC 2.A.1.1) family.</text>
</comment>
<name>STP14_ARATH</name>
<proteinExistence type="evidence at transcript level"/>
<keyword id="KW-0472">Membrane</keyword>
<keyword id="KW-1185">Reference proteome</keyword>
<keyword id="KW-0762">Sugar transport</keyword>
<keyword id="KW-0769">Symport</keyword>
<keyword id="KW-0812">Transmembrane</keyword>
<keyword id="KW-1133">Transmembrane helix</keyword>
<keyword id="KW-0813">Transport</keyword>
<gene>
    <name type="primary">STP14</name>
    <name type="ordered locus">At1g77210</name>
    <name type="ORF">T14N5.7</name>
</gene>
<feature type="chain" id="PRO_0000050444" description="Sugar transport protein 14">
    <location>
        <begin position="1"/>
        <end position="504"/>
    </location>
</feature>
<feature type="topological domain" description="Cytoplasmic" evidence="2">
    <location>
        <begin position="1"/>
        <end position="25"/>
    </location>
</feature>
<feature type="transmembrane region" description="Helical; Name=1" evidence="2">
    <location>
        <begin position="26"/>
        <end position="46"/>
    </location>
</feature>
<feature type="transmembrane region" description="Helical; Name=2" evidence="2">
    <location>
        <begin position="84"/>
        <end position="104"/>
    </location>
</feature>
<feature type="transmembrane region" description="Helical; Name=3" evidence="2">
    <location>
        <begin position="121"/>
        <end position="141"/>
    </location>
</feature>
<feature type="transmembrane region" description="Helical; Name=4" evidence="2">
    <location>
        <begin position="144"/>
        <end position="164"/>
    </location>
</feature>
<feature type="transmembrane region" description="Helical; Name=5" evidence="2">
    <location>
        <begin position="171"/>
        <end position="191"/>
    </location>
</feature>
<feature type="transmembrane region" description="Helical; Name=6" evidence="2">
    <location>
        <begin position="205"/>
        <end position="225"/>
    </location>
</feature>
<feature type="transmembrane region" description="Helical; Name=7" evidence="2">
    <location>
        <begin position="286"/>
        <end position="308"/>
    </location>
</feature>
<feature type="transmembrane region" description="Helical; Name=8" evidence="2">
    <location>
        <begin position="315"/>
        <end position="337"/>
    </location>
</feature>
<feature type="transmembrane region" description="Helical; Name=9" evidence="2">
    <location>
        <begin position="352"/>
        <end position="372"/>
    </location>
</feature>
<feature type="transmembrane region" description="Helical; Name=10" evidence="2">
    <location>
        <begin position="382"/>
        <end position="402"/>
    </location>
</feature>
<feature type="transmembrane region" description="Helical; Name=11" evidence="2">
    <location>
        <begin position="428"/>
        <end position="448"/>
    </location>
</feature>
<feature type="transmembrane region" description="Helical; Name=12" evidence="2">
    <location>
        <begin position="454"/>
        <end position="474"/>
    </location>
</feature>
<feature type="topological domain" description="Cytoplasmic" evidence="2">
    <location>
        <begin position="475"/>
        <end position="504"/>
    </location>
</feature>
<feature type="sequence conflict" description="In Ref. 4 and 5." evidence="3" ref="4 5">
    <original>I</original>
    <variation>M</variation>
    <location>
        <position position="455"/>
    </location>
</feature>
<sequence>MAGGALTDEGGLKRAHLYEHRITSYFIFACIVGSMGGSLFGYDLGVSGGVTSMDDFLKEFFPGIYKRKQMHLNETDYCKYDNQILTLFTSSLYFAGLISTFGASYVTRIYGRRGSILVGSVSFFLGGVINAAAKNILMLILGRIFLGIGIGFGNQAVPLYLSEMAPAKIRGTVNQLFQLTTCIGILVANLINYKTEQIHPWGWRLSLGLATVPAILMFLGGLVLPETPNSLVEQGKLEKAKAVLIKVRGTNNIEAEFQDLVEASDAARAVKNPFRNLLARRNRPQLVIGAIGLPAFQQLTGMNSILFYAPVMFQSLGFGGSASLISSTITNAALVVAAIMSMYSADKFGRRFLLLEASVEMFCYMVVVGVTLALKFGEGKELPKSLGLILVVLICLFVLAYGRSWGPMGWLVPSELFPLETRSAGQSVVVCVNLFFTALIAQCFLVSLCHLKYGIFLLFAGLILGMGSFVYFLLPETKQVPIEEVYLLWRQHWLWKKYVEDVDE</sequence>
<evidence type="ECO:0000250" key="1"/>
<evidence type="ECO:0000255" key="2"/>
<evidence type="ECO:0000305" key="3"/>